<gene>
    <name type="primary">MTP4</name>
    <name type="ordered locus">YALI0C18481g</name>
</gene>
<protein>
    <recommendedName>
        <fullName>Metallothionein-4</fullName>
        <shortName>MT-4</shortName>
    </recommendedName>
    <alternativeName>
        <fullName>MTPIV</fullName>
    </alternativeName>
    <alternativeName>
        <fullName>Metallothionein-IV</fullName>
        <shortName>MT-IV</shortName>
    </alternativeName>
</protein>
<evidence type="ECO:0000305" key="1"/>
<keyword id="KW-0186">Copper</keyword>
<keyword id="KW-0479">Metal-binding</keyword>
<keyword id="KW-0480">Metal-thiolate cluster</keyword>
<keyword id="KW-1185">Reference proteome</keyword>
<proteinExistence type="inferred from homology"/>
<organism>
    <name type="scientific">Yarrowia lipolytica (strain CLIB 122 / E 150)</name>
    <name type="common">Yeast</name>
    <name type="synonym">Candida lipolytica</name>
    <dbReference type="NCBI Taxonomy" id="284591"/>
    <lineage>
        <taxon>Eukaryota</taxon>
        <taxon>Fungi</taxon>
        <taxon>Dikarya</taxon>
        <taxon>Ascomycota</taxon>
        <taxon>Saccharomycotina</taxon>
        <taxon>Dipodascomycetes</taxon>
        <taxon>Dipodascales</taxon>
        <taxon>Dipodascales incertae sedis</taxon>
        <taxon>Yarrowia</taxon>
    </lineage>
</organism>
<reference key="1">
    <citation type="submission" date="1999-10" db="EMBL/GenBank/DDBJ databases">
        <title>Divergence between mechanisms for metal resistance in yeasts: the metallothionein genes from Yarrowia lipolytica.</title>
        <authorList>
            <person name="Garcia S."/>
            <person name="Prado M."/>
            <person name="Dominguez A."/>
        </authorList>
    </citation>
    <scope>NUCLEOTIDE SEQUENCE [GENOMIC DNA]</scope>
    <source>
        <strain>ATCC 90811 / CLIB 163 / JM12</strain>
    </source>
</reference>
<reference key="2">
    <citation type="journal article" date="2004" name="Nature">
        <title>Genome evolution in yeasts.</title>
        <authorList>
            <person name="Dujon B."/>
            <person name="Sherman D."/>
            <person name="Fischer G."/>
            <person name="Durrens P."/>
            <person name="Casaregola S."/>
            <person name="Lafontaine I."/>
            <person name="de Montigny J."/>
            <person name="Marck C."/>
            <person name="Neuveglise C."/>
            <person name="Talla E."/>
            <person name="Goffard N."/>
            <person name="Frangeul L."/>
            <person name="Aigle M."/>
            <person name="Anthouard V."/>
            <person name="Babour A."/>
            <person name="Barbe V."/>
            <person name="Barnay S."/>
            <person name="Blanchin S."/>
            <person name="Beckerich J.-M."/>
            <person name="Beyne E."/>
            <person name="Bleykasten C."/>
            <person name="Boisrame A."/>
            <person name="Boyer J."/>
            <person name="Cattolico L."/>
            <person name="Confanioleri F."/>
            <person name="de Daruvar A."/>
            <person name="Despons L."/>
            <person name="Fabre E."/>
            <person name="Fairhead C."/>
            <person name="Ferry-Dumazet H."/>
            <person name="Groppi A."/>
            <person name="Hantraye F."/>
            <person name="Hennequin C."/>
            <person name="Jauniaux N."/>
            <person name="Joyet P."/>
            <person name="Kachouri R."/>
            <person name="Kerrest A."/>
            <person name="Koszul R."/>
            <person name="Lemaire M."/>
            <person name="Lesur I."/>
            <person name="Ma L."/>
            <person name="Muller H."/>
            <person name="Nicaud J.-M."/>
            <person name="Nikolski M."/>
            <person name="Oztas S."/>
            <person name="Ozier-Kalogeropoulos O."/>
            <person name="Pellenz S."/>
            <person name="Potier S."/>
            <person name="Richard G.-F."/>
            <person name="Straub M.-L."/>
            <person name="Suleau A."/>
            <person name="Swennen D."/>
            <person name="Tekaia F."/>
            <person name="Wesolowski-Louvel M."/>
            <person name="Westhof E."/>
            <person name="Wirth B."/>
            <person name="Zeniou-Meyer M."/>
            <person name="Zivanovic Y."/>
            <person name="Bolotin-Fukuhara M."/>
            <person name="Thierry A."/>
            <person name="Bouchier C."/>
            <person name="Caudron B."/>
            <person name="Scarpelli C."/>
            <person name="Gaillardin C."/>
            <person name="Weissenbach J."/>
            <person name="Wincker P."/>
            <person name="Souciet J.-L."/>
        </authorList>
    </citation>
    <scope>NUCLEOTIDE SEQUENCE [LARGE SCALE GENOMIC DNA]</scope>
    <source>
        <strain>CLIB 122 / E 150</strain>
    </source>
</reference>
<feature type="chain" id="PRO_0000197369" description="Metallothionein-4">
    <location>
        <begin position="1"/>
        <end position="54"/>
    </location>
</feature>
<sequence length="54" mass="5845">MEFLNANFGASLIQSKHKTTKKHNLVNSCCCSKPAEKPTNSCTCSKCACDSCKC</sequence>
<dbReference type="EMBL" id="AJ250175">
    <property type="protein sequence ID" value="CAC12965.1"/>
    <property type="molecule type" value="Genomic_DNA"/>
</dbReference>
<dbReference type="EMBL" id="CR382129">
    <property type="protein sequence ID" value="CAR64301.1"/>
    <property type="molecule type" value="Genomic_DNA"/>
</dbReference>
<dbReference type="RefSeq" id="XP_002143036.1">
    <property type="nucleotide sequence ID" value="XM_002143000.1"/>
</dbReference>
<dbReference type="EnsemblFungi" id="CAR64301">
    <property type="protein sequence ID" value="CAR64301"/>
    <property type="gene ID" value="YALI0_C18481g"/>
</dbReference>
<dbReference type="VEuPathDB" id="FungiDB:YALI0_C18481g"/>
<dbReference type="HOGENOM" id="CLU_3034143_0_0_1"/>
<dbReference type="InParanoid" id="Q9HFC9"/>
<dbReference type="Proteomes" id="UP000001300">
    <property type="component" value="Chromosome C"/>
</dbReference>
<dbReference type="GO" id="GO:0005507">
    <property type="term" value="F:copper ion binding"/>
    <property type="evidence" value="ECO:0007669"/>
    <property type="project" value="InterPro"/>
</dbReference>
<dbReference type="InterPro" id="IPR000869">
    <property type="entry name" value="Metalthion_11"/>
</dbReference>
<dbReference type="Pfam" id="PF02066">
    <property type="entry name" value="Metallothio_11"/>
    <property type="match status" value="1"/>
</dbReference>
<dbReference type="PRINTS" id="PR00874">
    <property type="entry name" value="MTFUNGIIV"/>
</dbReference>
<comment type="similarity">
    <text evidence="1">Belongs to the metallothionein superfamily. Type 11 family.</text>
</comment>
<accession>Q9HFC9</accession>
<accession>B5FVC9</accession>
<name>MT4_YARLI</name>